<proteinExistence type="evidence at protein level"/>
<gene>
    <name type="primary">HBA</name>
</gene>
<protein>
    <recommendedName>
        <fullName>Hemoglobin subunit alpha</fullName>
    </recommendedName>
    <alternativeName>
        <fullName>Alpha-globin</fullName>
    </alternativeName>
    <alternativeName>
        <fullName>Hemoglobin alpha chain</fullName>
    </alternativeName>
    <component>
        <recommendedName>
            <fullName evidence="2">Hemopressin</fullName>
        </recommendedName>
    </component>
</protein>
<accession>P10778</accession>
<name>HBA_ODORO</name>
<keyword id="KW-0007">Acetylation</keyword>
<keyword id="KW-0903">Direct protein sequencing</keyword>
<keyword id="KW-0349">Heme</keyword>
<keyword id="KW-0408">Iron</keyword>
<keyword id="KW-0479">Metal-binding</keyword>
<keyword id="KW-0561">Oxygen transport</keyword>
<keyword id="KW-0597">Phosphoprotein</keyword>
<keyword id="KW-1185">Reference proteome</keyword>
<keyword id="KW-0813">Transport</keyword>
<sequence>VLSPADKTNVKTTWDKLGGHAGEYGGEALERTFMSFPTTKTYFPHFDLSPGSAQVKAHGKKVADALTTAVAHIDDLPGALSALSDLHAYKLRVDPVNFKLLSHCLLVTLACHHPAEFTPAVHASLDKFFSTVSTVLTSKYR</sequence>
<evidence type="ECO:0000250" key="1">
    <source>
        <dbReference type="UniProtKB" id="P01942"/>
    </source>
</evidence>
<evidence type="ECO:0000250" key="2">
    <source>
        <dbReference type="UniProtKB" id="P01946"/>
    </source>
</evidence>
<evidence type="ECO:0000250" key="3">
    <source>
        <dbReference type="UniProtKB" id="P69905"/>
    </source>
</evidence>
<evidence type="ECO:0000255" key="4">
    <source>
        <dbReference type="PROSITE-ProRule" id="PRU00238"/>
    </source>
</evidence>
<reference key="1">
    <citation type="journal article" date="1989" name="Biol. Chem. Hoppe-Seyler">
        <title>Carnivora: the primary structure of the Pacific Walrus (Odobenus rosmarus divergens, Pinnipedia) hemoglobin.</title>
        <authorList>
            <person name="Lin H.-X."/>
            <person name="Kleinschmidt T."/>
            <person name="Johnson M.L."/>
            <person name="Braunitzer G."/>
        </authorList>
    </citation>
    <scope>PROTEIN SEQUENCE</scope>
</reference>
<organism>
    <name type="scientific">Odobenus rosmarus divergens</name>
    <name type="common">Pacific walrus</name>
    <dbReference type="NCBI Taxonomy" id="9708"/>
    <lineage>
        <taxon>Eukaryota</taxon>
        <taxon>Metazoa</taxon>
        <taxon>Chordata</taxon>
        <taxon>Craniata</taxon>
        <taxon>Vertebrata</taxon>
        <taxon>Euteleostomi</taxon>
        <taxon>Mammalia</taxon>
        <taxon>Eutheria</taxon>
        <taxon>Laurasiatheria</taxon>
        <taxon>Carnivora</taxon>
        <taxon>Caniformia</taxon>
        <taxon>Pinnipedia</taxon>
        <taxon>Odobenidae</taxon>
        <taxon>Odobenus</taxon>
    </lineage>
</organism>
<dbReference type="PIR" id="S02819">
    <property type="entry name" value="HAUW"/>
</dbReference>
<dbReference type="SMR" id="P10778"/>
<dbReference type="FunCoup" id="P10778">
    <property type="interactions" value="1"/>
</dbReference>
<dbReference type="STRING" id="9708.P10778"/>
<dbReference type="InParanoid" id="P10778"/>
<dbReference type="Proteomes" id="UP000245340">
    <property type="component" value="Unplaced"/>
</dbReference>
<dbReference type="GO" id="GO:0072562">
    <property type="term" value="C:blood microparticle"/>
    <property type="evidence" value="ECO:0007669"/>
    <property type="project" value="TreeGrafter"/>
</dbReference>
<dbReference type="GO" id="GO:0031838">
    <property type="term" value="C:haptoglobin-hemoglobin complex"/>
    <property type="evidence" value="ECO:0007669"/>
    <property type="project" value="TreeGrafter"/>
</dbReference>
<dbReference type="GO" id="GO:0005833">
    <property type="term" value="C:hemoglobin complex"/>
    <property type="evidence" value="ECO:0007669"/>
    <property type="project" value="InterPro"/>
</dbReference>
<dbReference type="GO" id="GO:0031720">
    <property type="term" value="F:haptoglobin binding"/>
    <property type="evidence" value="ECO:0007669"/>
    <property type="project" value="TreeGrafter"/>
</dbReference>
<dbReference type="GO" id="GO:0020037">
    <property type="term" value="F:heme binding"/>
    <property type="evidence" value="ECO:0007669"/>
    <property type="project" value="InterPro"/>
</dbReference>
<dbReference type="GO" id="GO:0005506">
    <property type="term" value="F:iron ion binding"/>
    <property type="evidence" value="ECO:0007669"/>
    <property type="project" value="InterPro"/>
</dbReference>
<dbReference type="GO" id="GO:0043177">
    <property type="term" value="F:organic acid binding"/>
    <property type="evidence" value="ECO:0007669"/>
    <property type="project" value="TreeGrafter"/>
</dbReference>
<dbReference type="GO" id="GO:0019825">
    <property type="term" value="F:oxygen binding"/>
    <property type="evidence" value="ECO:0007669"/>
    <property type="project" value="InterPro"/>
</dbReference>
<dbReference type="GO" id="GO:0005344">
    <property type="term" value="F:oxygen carrier activity"/>
    <property type="evidence" value="ECO:0007669"/>
    <property type="project" value="UniProtKB-KW"/>
</dbReference>
<dbReference type="GO" id="GO:0004601">
    <property type="term" value="F:peroxidase activity"/>
    <property type="evidence" value="ECO:0007669"/>
    <property type="project" value="TreeGrafter"/>
</dbReference>
<dbReference type="GO" id="GO:0042744">
    <property type="term" value="P:hydrogen peroxide catabolic process"/>
    <property type="evidence" value="ECO:0007669"/>
    <property type="project" value="TreeGrafter"/>
</dbReference>
<dbReference type="CDD" id="cd08927">
    <property type="entry name" value="Hb-alpha-like"/>
    <property type="match status" value="1"/>
</dbReference>
<dbReference type="FunFam" id="1.10.490.10:FF:000002">
    <property type="entry name" value="Hemoglobin subunit alpha"/>
    <property type="match status" value="1"/>
</dbReference>
<dbReference type="Gene3D" id="1.10.490.10">
    <property type="entry name" value="Globins"/>
    <property type="match status" value="1"/>
</dbReference>
<dbReference type="InterPro" id="IPR000971">
    <property type="entry name" value="Globin"/>
</dbReference>
<dbReference type="InterPro" id="IPR009050">
    <property type="entry name" value="Globin-like_sf"/>
</dbReference>
<dbReference type="InterPro" id="IPR012292">
    <property type="entry name" value="Globin/Proto"/>
</dbReference>
<dbReference type="InterPro" id="IPR002338">
    <property type="entry name" value="Hemoglobin_a-typ"/>
</dbReference>
<dbReference type="InterPro" id="IPR050056">
    <property type="entry name" value="Hemoglobin_oxygen_transport"/>
</dbReference>
<dbReference type="InterPro" id="IPR002339">
    <property type="entry name" value="Hemoglobin_pi"/>
</dbReference>
<dbReference type="PANTHER" id="PTHR11442">
    <property type="entry name" value="HEMOGLOBIN FAMILY MEMBER"/>
    <property type="match status" value="1"/>
</dbReference>
<dbReference type="PANTHER" id="PTHR11442:SF48">
    <property type="entry name" value="HEMOGLOBIN SUBUNIT ALPHA"/>
    <property type="match status" value="1"/>
</dbReference>
<dbReference type="Pfam" id="PF00042">
    <property type="entry name" value="Globin"/>
    <property type="match status" value="1"/>
</dbReference>
<dbReference type="PRINTS" id="PR00612">
    <property type="entry name" value="ALPHAHAEM"/>
</dbReference>
<dbReference type="PRINTS" id="PR00815">
    <property type="entry name" value="PIHAEM"/>
</dbReference>
<dbReference type="SUPFAM" id="SSF46458">
    <property type="entry name" value="Globin-like"/>
    <property type="match status" value="1"/>
</dbReference>
<dbReference type="PROSITE" id="PS01033">
    <property type="entry name" value="GLOBIN"/>
    <property type="match status" value="1"/>
</dbReference>
<feature type="chain" id="PRO_0000052707" description="Hemoglobin subunit alpha">
    <location>
        <begin position="1"/>
        <end position="141"/>
    </location>
</feature>
<feature type="peptide" id="PRO_0000455910" description="Hemopressin" evidence="2">
    <location>
        <begin position="95"/>
        <end position="103"/>
    </location>
</feature>
<feature type="domain" description="Globin" evidence="4">
    <location>
        <begin position="1"/>
        <end position="141"/>
    </location>
</feature>
<feature type="binding site" evidence="4">
    <location>
        <position position="58"/>
    </location>
    <ligand>
        <name>O2</name>
        <dbReference type="ChEBI" id="CHEBI:15379"/>
    </ligand>
</feature>
<feature type="binding site" description="proximal binding residue" evidence="4">
    <location>
        <position position="87"/>
    </location>
    <ligand>
        <name>heme b</name>
        <dbReference type="ChEBI" id="CHEBI:60344"/>
    </ligand>
    <ligandPart>
        <name>Fe</name>
        <dbReference type="ChEBI" id="CHEBI:18248"/>
    </ligandPart>
</feature>
<feature type="modified residue" description="Phosphoserine" evidence="3">
    <location>
        <position position="3"/>
    </location>
</feature>
<feature type="modified residue" description="N6-succinyllysine" evidence="1">
    <location>
        <position position="7"/>
    </location>
</feature>
<feature type="modified residue" description="Phosphothreonine" evidence="3">
    <location>
        <position position="8"/>
    </location>
</feature>
<feature type="modified residue" description="N6-succinyllysine" evidence="1">
    <location>
        <position position="11"/>
    </location>
</feature>
<feature type="modified residue" description="N6-acetyllysine; alternate" evidence="3">
    <location>
        <position position="16"/>
    </location>
</feature>
<feature type="modified residue" description="N6-succinyllysine; alternate" evidence="1">
    <location>
        <position position="16"/>
    </location>
</feature>
<feature type="modified residue" description="Phosphotyrosine" evidence="3">
    <location>
        <position position="24"/>
    </location>
</feature>
<feature type="modified residue" description="Phosphoserine" evidence="3">
    <location>
        <position position="35"/>
    </location>
</feature>
<feature type="modified residue" description="N6-succinyllysine" evidence="1">
    <location>
        <position position="40"/>
    </location>
</feature>
<feature type="modified residue" description="Phosphoserine" evidence="3">
    <location>
        <position position="49"/>
    </location>
</feature>
<feature type="modified residue" description="Phosphoserine" evidence="1">
    <location>
        <position position="102"/>
    </location>
</feature>
<feature type="modified residue" description="Phosphothreonine" evidence="1">
    <location>
        <position position="108"/>
    </location>
</feature>
<feature type="modified residue" description="Phosphoserine" evidence="1">
    <location>
        <position position="124"/>
    </location>
</feature>
<feature type="modified residue" description="Phosphothreonine" evidence="1">
    <location>
        <position position="134"/>
    </location>
</feature>
<feature type="modified residue" description="Phosphothreonine" evidence="1">
    <location>
        <position position="137"/>
    </location>
</feature>
<feature type="modified residue" description="Phosphoserine" evidence="1">
    <location>
        <position position="138"/>
    </location>
</feature>
<comment type="function">
    <text>Involved in oxygen transport from the lung to the various peripheral tissues.</text>
</comment>
<comment type="function">
    <molecule>Hemopressin</molecule>
    <text evidence="2">Hemopressin acts as an antagonist peptide of the cannabinoid receptor CNR1. Hemopressin-binding efficiently blocks cannabinoid receptor CNR1 and subsequent signaling.</text>
</comment>
<comment type="subunit">
    <text>Heterotetramer of two alpha chains and two beta chains.</text>
</comment>
<comment type="tissue specificity">
    <text>Red blood cells.</text>
</comment>
<comment type="similarity">
    <text evidence="4">Belongs to the globin family.</text>
</comment>